<reference key="1">
    <citation type="journal article" date="2002" name="Nature">
        <title>Comparison of the genomes of two Xanthomonas pathogens with differing host specificities.</title>
        <authorList>
            <person name="da Silva A.C.R."/>
            <person name="Ferro J.A."/>
            <person name="Reinach F.C."/>
            <person name="Farah C.S."/>
            <person name="Furlan L.R."/>
            <person name="Quaggio R.B."/>
            <person name="Monteiro-Vitorello C.B."/>
            <person name="Van Sluys M.A."/>
            <person name="Almeida N.F. Jr."/>
            <person name="Alves L.M.C."/>
            <person name="do Amaral A.M."/>
            <person name="Bertolini M.C."/>
            <person name="Camargo L.E.A."/>
            <person name="Camarotte G."/>
            <person name="Cannavan F."/>
            <person name="Cardozo J."/>
            <person name="Chambergo F."/>
            <person name="Ciapina L.P."/>
            <person name="Cicarelli R.M.B."/>
            <person name="Coutinho L.L."/>
            <person name="Cursino-Santos J.R."/>
            <person name="El-Dorry H."/>
            <person name="Faria J.B."/>
            <person name="Ferreira A.J.S."/>
            <person name="Ferreira R.C.C."/>
            <person name="Ferro M.I.T."/>
            <person name="Formighieri E.F."/>
            <person name="Franco M.C."/>
            <person name="Greggio C.C."/>
            <person name="Gruber A."/>
            <person name="Katsuyama A.M."/>
            <person name="Kishi L.T."/>
            <person name="Leite R.P."/>
            <person name="Lemos E.G.M."/>
            <person name="Lemos M.V.F."/>
            <person name="Locali E.C."/>
            <person name="Machado M.A."/>
            <person name="Madeira A.M.B.N."/>
            <person name="Martinez-Rossi N.M."/>
            <person name="Martins E.C."/>
            <person name="Meidanis J."/>
            <person name="Menck C.F.M."/>
            <person name="Miyaki C.Y."/>
            <person name="Moon D.H."/>
            <person name="Moreira L.M."/>
            <person name="Novo M.T.M."/>
            <person name="Okura V.K."/>
            <person name="Oliveira M.C."/>
            <person name="Oliveira V.R."/>
            <person name="Pereira H.A."/>
            <person name="Rossi A."/>
            <person name="Sena J.A.D."/>
            <person name="Silva C."/>
            <person name="de Souza R.F."/>
            <person name="Spinola L.A.F."/>
            <person name="Takita M.A."/>
            <person name="Tamura R.E."/>
            <person name="Teixeira E.C."/>
            <person name="Tezza R.I.D."/>
            <person name="Trindade dos Santos M."/>
            <person name="Truffi D."/>
            <person name="Tsai S.M."/>
            <person name="White F.F."/>
            <person name="Setubal J.C."/>
            <person name="Kitajima J.P."/>
        </authorList>
    </citation>
    <scope>NUCLEOTIDE SEQUENCE [LARGE SCALE GENOMIC DNA]</scope>
    <source>
        <strain>ATCC 33913 / DSM 3586 / NCPPB 528 / LMG 568 / P 25</strain>
    </source>
</reference>
<name>RLMM_XANCP</name>
<gene>
    <name evidence="1" type="primary">rlmM</name>
    <name type="ordered locus">XCC0816</name>
</gene>
<feature type="chain" id="PRO_0000070434" description="Ribosomal RNA large subunit methyltransferase M">
    <location>
        <begin position="1"/>
        <end position="347"/>
    </location>
</feature>
<feature type="active site" description="Proton acceptor" evidence="1">
    <location>
        <position position="301"/>
    </location>
</feature>
<feature type="binding site" evidence="1">
    <location>
        <position position="184"/>
    </location>
    <ligand>
        <name>S-adenosyl-L-methionine</name>
        <dbReference type="ChEBI" id="CHEBI:59789"/>
    </ligand>
</feature>
<feature type="binding site" evidence="1">
    <location>
        <begin position="217"/>
        <end position="220"/>
    </location>
    <ligand>
        <name>S-adenosyl-L-methionine</name>
        <dbReference type="ChEBI" id="CHEBI:59789"/>
    </ligand>
</feature>
<feature type="binding site" evidence="1">
    <location>
        <position position="236"/>
    </location>
    <ligand>
        <name>S-adenosyl-L-methionine</name>
        <dbReference type="ChEBI" id="CHEBI:59789"/>
    </ligand>
</feature>
<feature type="binding site" evidence="1">
    <location>
        <position position="256"/>
    </location>
    <ligand>
        <name>S-adenosyl-L-methionine</name>
        <dbReference type="ChEBI" id="CHEBI:59789"/>
    </ligand>
</feature>
<feature type="binding site" evidence="1">
    <location>
        <position position="272"/>
    </location>
    <ligand>
        <name>S-adenosyl-L-methionine</name>
        <dbReference type="ChEBI" id="CHEBI:59789"/>
    </ligand>
</feature>
<keyword id="KW-0963">Cytoplasm</keyword>
<keyword id="KW-0489">Methyltransferase</keyword>
<keyword id="KW-1185">Reference proteome</keyword>
<keyword id="KW-0698">rRNA processing</keyword>
<keyword id="KW-0949">S-adenosyl-L-methionine</keyword>
<keyword id="KW-0808">Transferase</keyword>
<sequence length="347" mass="38912">MSGLLCYCRQGFEPELAAELSARAAFVGIAGYARTQRNDGYVLFVCDEAAQLAARLQWRELIFARQKLVVLAELKGLDPKDRITPILAALDGQPRFGDLWVEHPDSDAGKPLAGLARSFGNALRPALRKAGLLTDKPQARLPRLHICFLDGDHALLAVADSSDSAPWPLGIPRLKLLPEAPSRSALKLDEALLTLLTPEEREQLVKPGMRAADLGAAPGGWTWVLTRQHVHVTSVDNGPLREHVLATGLVEHLRADGFHWKPAQPLDWMVCDMVEQPRRVAERMATWVREGWCRHTIFNLKLPMKKRWDETRLCLDLFEQQAEKSLTVRAKQLYHDREEITVLAMRG</sequence>
<protein>
    <recommendedName>
        <fullName evidence="1">Ribosomal RNA large subunit methyltransferase M</fullName>
        <ecNumber evidence="1">2.1.1.186</ecNumber>
    </recommendedName>
    <alternativeName>
        <fullName evidence="1">23S rRNA (cytidine2498-2'-O)-methyltransferase</fullName>
    </alternativeName>
    <alternativeName>
        <fullName evidence="1">23S rRNA 2'-O-ribose methyltransferase RlmM</fullName>
    </alternativeName>
</protein>
<organism>
    <name type="scientific">Xanthomonas campestris pv. campestris (strain ATCC 33913 / DSM 3586 / NCPPB 528 / LMG 568 / P 25)</name>
    <dbReference type="NCBI Taxonomy" id="190485"/>
    <lineage>
        <taxon>Bacteria</taxon>
        <taxon>Pseudomonadati</taxon>
        <taxon>Pseudomonadota</taxon>
        <taxon>Gammaproteobacteria</taxon>
        <taxon>Lysobacterales</taxon>
        <taxon>Lysobacteraceae</taxon>
        <taxon>Xanthomonas</taxon>
    </lineage>
</organism>
<accession>Q8PCB8</accession>
<dbReference type="EC" id="2.1.1.186" evidence="1"/>
<dbReference type="EMBL" id="AE008922">
    <property type="protein sequence ID" value="AAM40131.1"/>
    <property type="molecule type" value="Genomic_DNA"/>
</dbReference>
<dbReference type="RefSeq" id="NP_636207.1">
    <property type="nucleotide sequence ID" value="NC_003902.1"/>
</dbReference>
<dbReference type="RefSeq" id="WP_011036052.1">
    <property type="nucleotide sequence ID" value="NC_003902.1"/>
</dbReference>
<dbReference type="SMR" id="Q8PCB8"/>
<dbReference type="STRING" id="190485.XCC0816"/>
<dbReference type="EnsemblBacteria" id="AAM40131">
    <property type="protein sequence ID" value="AAM40131"/>
    <property type="gene ID" value="XCC0816"/>
</dbReference>
<dbReference type="KEGG" id="xcc:XCC0816"/>
<dbReference type="PATRIC" id="fig|190485.4.peg.888"/>
<dbReference type="eggNOG" id="COG2933">
    <property type="taxonomic scope" value="Bacteria"/>
</dbReference>
<dbReference type="HOGENOM" id="CLU_043780_0_0_6"/>
<dbReference type="OrthoDB" id="154490at2"/>
<dbReference type="Proteomes" id="UP000001010">
    <property type="component" value="Chromosome"/>
</dbReference>
<dbReference type="GO" id="GO:0005737">
    <property type="term" value="C:cytoplasm"/>
    <property type="evidence" value="ECO:0007669"/>
    <property type="project" value="UniProtKB-SubCell"/>
</dbReference>
<dbReference type="GO" id="GO:0070677">
    <property type="term" value="F:rRNA (cytosine-2'-O-)-methyltransferase activity"/>
    <property type="evidence" value="ECO:0000318"/>
    <property type="project" value="GO_Central"/>
</dbReference>
<dbReference type="GO" id="GO:0006364">
    <property type="term" value="P:rRNA processing"/>
    <property type="evidence" value="ECO:0000318"/>
    <property type="project" value="GO_Central"/>
</dbReference>
<dbReference type="Gene3D" id="3.30.2300.20">
    <property type="match status" value="1"/>
</dbReference>
<dbReference type="Gene3D" id="3.30.70.2810">
    <property type="match status" value="1"/>
</dbReference>
<dbReference type="Gene3D" id="3.40.50.150">
    <property type="entry name" value="Vaccinia Virus protein VP39"/>
    <property type="match status" value="1"/>
</dbReference>
<dbReference type="HAMAP" id="MF_01551">
    <property type="entry name" value="23SrRNA_methyltr_M"/>
    <property type="match status" value="1"/>
</dbReference>
<dbReference type="InterPro" id="IPR040739">
    <property type="entry name" value="RlmM_FDX"/>
</dbReference>
<dbReference type="InterPro" id="IPR048646">
    <property type="entry name" value="RlmM_THUMP-like"/>
</dbReference>
<dbReference type="InterPro" id="IPR002877">
    <property type="entry name" value="RNA_MeTrfase_FtsJ_dom"/>
</dbReference>
<dbReference type="InterPro" id="IPR011224">
    <property type="entry name" value="rRNA_MeTrfase_M"/>
</dbReference>
<dbReference type="InterPro" id="IPR029063">
    <property type="entry name" value="SAM-dependent_MTases_sf"/>
</dbReference>
<dbReference type="NCBIfam" id="NF008734">
    <property type="entry name" value="PRK11760.1"/>
    <property type="match status" value="1"/>
</dbReference>
<dbReference type="PANTHER" id="PTHR37524">
    <property type="entry name" value="RIBOSOMAL RNA LARGE SUBUNIT METHYLTRANSFERASE M"/>
    <property type="match status" value="1"/>
</dbReference>
<dbReference type="PANTHER" id="PTHR37524:SF2">
    <property type="entry name" value="RIBOSOMAL RNA METHYLTRANSFERASE FTSJ DOMAIN-CONTAINING PROTEIN"/>
    <property type="match status" value="1"/>
</dbReference>
<dbReference type="Pfam" id="PF01728">
    <property type="entry name" value="FtsJ"/>
    <property type="match status" value="1"/>
</dbReference>
<dbReference type="Pfam" id="PF18125">
    <property type="entry name" value="RlmM_FDX"/>
    <property type="match status" value="1"/>
</dbReference>
<dbReference type="Pfam" id="PF21239">
    <property type="entry name" value="RLMM_N"/>
    <property type="match status" value="1"/>
</dbReference>
<dbReference type="PIRSF" id="PIRSF028774">
    <property type="entry name" value="UCP028774"/>
    <property type="match status" value="1"/>
</dbReference>
<dbReference type="SUPFAM" id="SSF53335">
    <property type="entry name" value="S-adenosyl-L-methionine-dependent methyltransferases"/>
    <property type="match status" value="1"/>
</dbReference>
<evidence type="ECO:0000255" key="1">
    <source>
        <dbReference type="HAMAP-Rule" id="MF_01551"/>
    </source>
</evidence>
<comment type="function">
    <text evidence="1">Catalyzes the 2'-O-methylation at nucleotide C2498 in 23S rRNA.</text>
</comment>
<comment type="catalytic activity">
    <reaction evidence="1">
        <text>cytidine(2498) in 23S rRNA + S-adenosyl-L-methionine = 2'-O-methylcytidine(2498) in 23S rRNA + S-adenosyl-L-homocysteine + H(+)</text>
        <dbReference type="Rhea" id="RHEA:42788"/>
        <dbReference type="Rhea" id="RHEA-COMP:10244"/>
        <dbReference type="Rhea" id="RHEA-COMP:10245"/>
        <dbReference type="ChEBI" id="CHEBI:15378"/>
        <dbReference type="ChEBI" id="CHEBI:57856"/>
        <dbReference type="ChEBI" id="CHEBI:59789"/>
        <dbReference type="ChEBI" id="CHEBI:74495"/>
        <dbReference type="ChEBI" id="CHEBI:82748"/>
        <dbReference type="EC" id="2.1.1.186"/>
    </reaction>
</comment>
<comment type="subunit">
    <text evidence="1">Monomer.</text>
</comment>
<comment type="subcellular location">
    <subcellularLocation>
        <location evidence="1">Cytoplasm</location>
    </subcellularLocation>
</comment>
<comment type="similarity">
    <text evidence="1">Belongs to the class I-like SAM-binding methyltransferase superfamily. RNA methyltransferase RlmE family. RlmM subfamily.</text>
</comment>
<proteinExistence type="inferred from homology"/>